<protein>
    <recommendedName>
        <fullName>Sodium/potassium-transporting ATPase subunit beta-2</fullName>
    </recommendedName>
    <alternativeName>
        <fullName>Protein nervana 2</fullName>
    </alternativeName>
    <alternativeName>
        <fullName>Sodium/potassium-dependent ATPase subunit beta-2</fullName>
    </alternativeName>
</protein>
<comment type="function">
    <text evidence="5">This is the non-catalytic component of the active enzyme, which catalyzes the hydrolysis of ATP coupled with the exchange of Na(+) and K(+) ions across the plasma membrane. The beta subunit regulates, through assembly of alpha/beta heterodimers, the number of sodium pumps transported to the plasma membrane.</text>
</comment>
<comment type="subunit">
    <text evidence="7">The sodium/potassium-transporting ATPase is composed of a catalytic alpha subunit, an auxiliary non-catalytic beta subunit and an additional regulatory subunit.</text>
</comment>
<comment type="subcellular location">
    <subcellularLocation>
        <location evidence="7">Cell membrane</location>
        <topology evidence="7">Single-pass type II membrane protein</topology>
    </subcellularLocation>
</comment>
<comment type="alternative products">
    <event type="alternative splicing"/>
    <isoform>
        <id>Q24048-1</id>
        <name>2.2</name>
        <name>C</name>
        <name>F</name>
        <sequence type="displayed"/>
    </isoform>
    <isoform>
        <id>Q24048-2</id>
        <name>2.1</name>
        <name>A</name>
        <name>D</name>
        <sequence type="described" ref="VSP_000350"/>
    </isoform>
</comment>
<comment type="tissue specificity">
    <text evidence="4 5">In embryos, it is expressed in the neurons of the CNS and PNS, in Garland cells and posterior spiracles. In adults, it shows a nervous system specific distribution: optic lobes, brain, thoracic ganglia and axonal pathways in the leg. Both isoforms concentrate in the adult head, isoform 2.2 being predominant. Both isoforms are weakly expressed in the thorax and very poorly expressed in the abdomen.</text>
</comment>
<comment type="developmental stage">
    <text evidence="4">Expression in embryos is first seen 12 hours after oviposition, peaks at 24 hours and decreases to a low level by 48 hours. Low levels are seen during larval and early pupal development. Levels increase during late pupae to maximal at the adult stage.</text>
</comment>
<comment type="similarity">
    <text evidence="7">Belongs to the X(+)/potassium ATPases subunit beta family.</text>
</comment>
<sequence length="323" mass="37283">MPTITEDCIDGFQQYYSRPPERPKKKSLKQMVYDSEDNSYFGRSMDSWAKIGIFYVAFYGVLAALVAICMWAFFQTLDPRIPKWTLDRSLIGTNPGLGFRPLPPVDNVESTLIWYKGTQHENYKHWTDSLDDFLAVYKVPGLTPGRGQNIYNCDYNQPPPKGQVCDVDIKTWSPCTKENNYSYHKSAPCIFLKLNKIYGWIPEYYNRSNDLPANMPASLKTYIAEVEKTQPEKLNTIWVSCEGENPADQENIGAVNYLPIRGFPGYFYPYQNSEGYLSPLVAVHFQRPKRGIIINVECRAWARNIIHDRKERIGSVHYELLID</sequence>
<dbReference type="EMBL" id="U22439">
    <property type="protein sequence ID" value="AAC46609.1"/>
    <property type="molecule type" value="mRNA"/>
</dbReference>
<dbReference type="EMBL" id="U22440">
    <property type="protein sequence ID" value="AAC46610.1"/>
    <property type="molecule type" value="mRNA"/>
</dbReference>
<dbReference type="EMBL" id="AE014134">
    <property type="protein sequence ID" value="AAF52438.2"/>
    <property type="molecule type" value="Genomic_DNA"/>
</dbReference>
<dbReference type="EMBL" id="AE014134">
    <property type="protein sequence ID" value="AAN10600.1"/>
    <property type="molecule type" value="Genomic_DNA"/>
</dbReference>
<dbReference type="EMBL" id="AY060289">
    <property type="protein sequence ID" value="AAL25328.1"/>
    <property type="molecule type" value="mRNA"/>
</dbReference>
<dbReference type="RefSeq" id="NP_001014475.1">
    <molecule id="Q24048-1"/>
    <property type="nucleotide sequence ID" value="NM_001014475.2"/>
</dbReference>
<dbReference type="RefSeq" id="NP_001014476.1">
    <molecule id="Q24048-2"/>
    <property type="nucleotide sequence ID" value="NM_001014476.2"/>
</dbReference>
<dbReference type="RefSeq" id="NP_001260164.1">
    <molecule id="Q24048-1"/>
    <property type="nucleotide sequence ID" value="NM_001273235.1"/>
</dbReference>
<dbReference type="RefSeq" id="NP_477168.1">
    <molecule id="Q24048-1"/>
    <property type="nucleotide sequence ID" value="NM_057820.4"/>
</dbReference>
<dbReference type="RefSeq" id="NP_477169.1">
    <molecule id="Q24048-2"/>
    <property type="nucleotide sequence ID" value="NM_057821.4"/>
</dbReference>
<dbReference type="RefSeq" id="NP_723216.1">
    <molecule id="Q24048-2"/>
    <property type="nucleotide sequence ID" value="NM_164711.2"/>
</dbReference>
<dbReference type="SMR" id="Q24048"/>
<dbReference type="BioGRID" id="60105">
    <property type="interactions" value="6"/>
</dbReference>
<dbReference type="FunCoup" id="Q24048">
    <property type="interactions" value="272"/>
</dbReference>
<dbReference type="IntAct" id="Q24048">
    <property type="interactions" value="34"/>
</dbReference>
<dbReference type="STRING" id="7227.FBpp0079009"/>
<dbReference type="GlyCosmos" id="Q24048">
    <property type="glycosylation" value="2 sites, No reported glycans"/>
</dbReference>
<dbReference type="GlyGen" id="Q24048">
    <property type="glycosylation" value="2 sites"/>
</dbReference>
<dbReference type="iPTMnet" id="Q24048"/>
<dbReference type="PaxDb" id="7227-FBpp0079009"/>
<dbReference type="DNASU" id="33953"/>
<dbReference type="EnsemblMetazoa" id="FBtr0079381">
    <molecule id="Q24048-1"/>
    <property type="protein sequence ID" value="FBpp0079009"/>
    <property type="gene ID" value="FBgn0015777"/>
</dbReference>
<dbReference type="EnsemblMetazoa" id="FBtr0079382">
    <molecule id="Q24048-2"/>
    <property type="protein sequence ID" value="FBpp0079010"/>
    <property type="gene ID" value="FBgn0015777"/>
</dbReference>
<dbReference type="EnsemblMetazoa" id="FBtr0079383">
    <molecule id="Q24048-2"/>
    <property type="protein sequence ID" value="FBpp0079011"/>
    <property type="gene ID" value="FBgn0015777"/>
</dbReference>
<dbReference type="EnsemblMetazoa" id="FBtr0100381">
    <molecule id="Q24048-2"/>
    <property type="protein sequence ID" value="FBpp0099793"/>
    <property type="gene ID" value="FBgn0015777"/>
</dbReference>
<dbReference type="EnsemblMetazoa" id="FBtr0100382">
    <molecule id="Q24048-1"/>
    <property type="protein sequence ID" value="FBpp0099794"/>
    <property type="gene ID" value="FBgn0015777"/>
</dbReference>
<dbReference type="EnsemblMetazoa" id="FBtr0332369">
    <molecule id="Q24048-1"/>
    <property type="protein sequence ID" value="FBpp0304645"/>
    <property type="gene ID" value="FBgn0015777"/>
</dbReference>
<dbReference type="GeneID" id="33953"/>
<dbReference type="KEGG" id="dme:Dmel_CG9261"/>
<dbReference type="AGR" id="FB:FBgn0015777"/>
<dbReference type="CTD" id="33953"/>
<dbReference type="FlyBase" id="FBgn0015777">
    <property type="gene designation" value="nrv2"/>
</dbReference>
<dbReference type="VEuPathDB" id="VectorBase:FBgn0015777"/>
<dbReference type="eggNOG" id="KOG3927">
    <property type="taxonomic scope" value="Eukaryota"/>
</dbReference>
<dbReference type="GeneTree" id="ENSGT01030000234579"/>
<dbReference type="HOGENOM" id="CLU_057702_0_0_1"/>
<dbReference type="InParanoid" id="Q24048"/>
<dbReference type="OMA" id="IGDPTYY"/>
<dbReference type="OrthoDB" id="5912413at2759"/>
<dbReference type="PhylomeDB" id="Q24048"/>
<dbReference type="Reactome" id="R-DME-210991">
    <property type="pathway name" value="Basigin interactions"/>
</dbReference>
<dbReference type="Reactome" id="R-DME-2173795">
    <property type="pathway name" value="Downregulation of SMAD2/3:SMAD4 transcriptional activity"/>
</dbReference>
<dbReference type="BioGRID-ORCS" id="33953">
    <property type="hits" value="0 hits in 3 CRISPR screens"/>
</dbReference>
<dbReference type="ChiTaRS" id="nrv2">
    <property type="organism name" value="fly"/>
</dbReference>
<dbReference type="GenomeRNAi" id="33953"/>
<dbReference type="PRO" id="PR:Q24048"/>
<dbReference type="Proteomes" id="UP000000803">
    <property type="component" value="Chromosome 2L"/>
</dbReference>
<dbReference type="Bgee" id="FBgn0015777">
    <property type="expression patterns" value="Expressed in ensheathing neuropil associated glial cell (Drosophila) in brain and 250 other cell types or tissues"/>
</dbReference>
<dbReference type="ExpressionAtlas" id="Q24048">
    <property type="expression patterns" value="baseline and differential"/>
</dbReference>
<dbReference type="GO" id="GO:0030424">
    <property type="term" value="C:axon"/>
    <property type="evidence" value="ECO:0000314"/>
    <property type="project" value="FlyBase"/>
</dbReference>
<dbReference type="GO" id="GO:0005886">
    <property type="term" value="C:plasma membrane"/>
    <property type="evidence" value="ECO:0000314"/>
    <property type="project" value="FlyBase"/>
</dbReference>
<dbReference type="GO" id="GO:0005918">
    <property type="term" value="C:septate junction"/>
    <property type="evidence" value="ECO:0000314"/>
    <property type="project" value="FlyBase"/>
</dbReference>
<dbReference type="GO" id="GO:0005890">
    <property type="term" value="C:sodium:potassium-exchanging ATPase complex"/>
    <property type="evidence" value="ECO:0000314"/>
    <property type="project" value="FlyBase"/>
</dbReference>
<dbReference type="GO" id="GO:0001671">
    <property type="term" value="F:ATPase activator activity"/>
    <property type="evidence" value="ECO:0000314"/>
    <property type="project" value="FlyBase"/>
</dbReference>
<dbReference type="GO" id="GO:0061343">
    <property type="term" value="P:cell adhesion involved in heart morphogenesis"/>
    <property type="evidence" value="ECO:0000315"/>
    <property type="project" value="FlyBase"/>
</dbReference>
<dbReference type="GO" id="GO:0060857">
    <property type="term" value="P:establishment of glial blood-brain barrier"/>
    <property type="evidence" value="ECO:0000315"/>
    <property type="project" value="FlyBase"/>
</dbReference>
<dbReference type="GO" id="GO:0030007">
    <property type="term" value="P:intracellular potassium ion homeostasis"/>
    <property type="evidence" value="ECO:0000318"/>
    <property type="project" value="GO_Central"/>
</dbReference>
<dbReference type="GO" id="GO:0006883">
    <property type="term" value="P:intracellular sodium ion homeostasis"/>
    <property type="evidence" value="ECO:0000318"/>
    <property type="project" value="GO_Central"/>
</dbReference>
<dbReference type="GO" id="GO:0006812">
    <property type="term" value="P:monoatomic cation transport"/>
    <property type="evidence" value="ECO:0000314"/>
    <property type="project" value="FlyBase"/>
</dbReference>
<dbReference type="GO" id="GO:0007424">
    <property type="term" value="P:open tracheal system development"/>
    <property type="evidence" value="ECO:0000315"/>
    <property type="project" value="FlyBase"/>
</dbReference>
<dbReference type="GO" id="GO:1990573">
    <property type="term" value="P:potassium ion import across plasma membrane"/>
    <property type="evidence" value="ECO:0000318"/>
    <property type="project" value="GO_Central"/>
</dbReference>
<dbReference type="GO" id="GO:0035158">
    <property type="term" value="P:regulation of tube diameter, open tracheal system"/>
    <property type="evidence" value="ECO:0000315"/>
    <property type="project" value="FlyBase"/>
</dbReference>
<dbReference type="GO" id="GO:0035159">
    <property type="term" value="P:regulation of tube length, open tracheal system"/>
    <property type="evidence" value="ECO:0000315"/>
    <property type="project" value="FlyBase"/>
</dbReference>
<dbReference type="GO" id="GO:0035151">
    <property type="term" value="P:regulation of tube size, open tracheal system"/>
    <property type="evidence" value="ECO:0000315"/>
    <property type="project" value="FlyBase"/>
</dbReference>
<dbReference type="GO" id="GO:0007605">
    <property type="term" value="P:sensory perception of sound"/>
    <property type="evidence" value="ECO:0000315"/>
    <property type="project" value="FlyBase"/>
</dbReference>
<dbReference type="GO" id="GO:0019991">
    <property type="term" value="P:septate junction assembly"/>
    <property type="evidence" value="ECO:0000315"/>
    <property type="project" value="FlyBase"/>
</dbReference>
<dbReference type="GO" id="GO:0036376">
    <property type="term" value="P:sodium ion export across plasma membrane"/>
    <property type="evidence" value="ECO:0000318"/>
    <property type="project" value="GO_Central"/>
</dbReference>
<dbReference type="FunFam" id="2.60.40.1660:FF:000004">
    <property type="entry name" value="sodium/potassium-transporting ATPase subunit beta-2"/>
    <property type="match status" value="1"/>
</dbReference>
<dbReference type="Gene3D" id="2.60.40.1660">
    <property type="entry name" value="Na, k-atpase alpha subunit"/>
    <property type="match status" value="1"/>
</dbReference>
<dbReference type="InterPro" id="IPR000402">
    <property type="entry name" value="Na/K_ATPase_sub_beta"/>
</dbReference>
<dbReference type="InterPro" id="IPR038702">
    <property type="entry name" value="Na/K_ATPase_sub_beta_sf"/>
</dbReference>
<dbReference type="PANTHER" id="PTHR11523">
    <property type="entry name" value="SODIUM/POTASSIUM-DEPENDENT ATPASE BETA SUBUNIT"/>
    <property type="match status" value="1"/>
</dbReference>
<dbReference type="PANTHER" id="PTHR11523:SF46">
    <property type="entry name" value="SODIUM_POTASSIUM-TRANSPORTING ATPASE SUBUNIT BETA-2"/>
    <property type="match status" value="1"/>
</dbReference>
<dbReference type="Pfam" id="PF00287">
    <property type="entry name" value="Na_K-ATPase"/>
    <property type="match status" value="1"/>
</dbReference>
<reference key="1">
    <citation type="journal article" date="1995" name="Proc. Natl. Acad. Sci. U.S.A.">
        <title>Two Drosophila nervous system antigens, Nervana 1 and 2, are homologous to the beta subunit of Na+,K(+)-ATPase.</title>
        <authorList>
            <person name="Sun B."/>
            <person name="Salvaterra P.M."/>
        </authorList>
    </citation>
    <scope>NUCLEOTIDE SEQUENCE [MRNA] (ISOFORMS 2.1 AND 2.2)</scope>
    <source>
        <strain>Canton-S</strain>
        <tissue>Embryo</tissue>
    </source>
</reference>
<reference key="2">
    <citation type="journal article" date="2000" name="Science">
        <title>The genome sequence of Drosophila melanogaster.</title>
        <authorList>
            <person name="Adams M.D."/>
            <person name="Celniker S.E."/>
            <person name="Holt R.A."/>
            <person name="Evans C.A."/>
            <person name="Gocayne J.D."/>
            <person name="Amanatides P.G."/>
            <person name="Scherer S.E."/>
            <person name="Li P.W."/>
            <person name="Hoskins R.A."/>
            <person name="Galle R.F."/>
            <person name="George R.A."/>
            <person name="Lewis S.E."/>
            <person name="Richards S."/>
            <person name="Ashburner M."/>
            <person name="Henderson S.N."/>
            <person name="Sutton G.G."/>
            <person name="Wortman J.R."/>
            <person name="Yandell M.D."/>
            <person name="Zhang Q."/>
            <person name="Chen L.X."/>
            <person name="Brandon R.C."/>
            <person name="Rogers Y.-H.C."/>
            <person name="Blazej R.G."/>
            <person name="Champe M."/>
            <person name="Pfeiffer B.D."/>
            <person name="Wan K.H."/>
            <person name="Doyle C."/>
            <person name="Baxter E.G."/>
            <person name="Helt G."/>
            <person name="Nelson C.R."/>
            <person name="Miklos G.L.G."/>
            <person name="Abril J.F."/>
            <person name="Agbayani A."/>
            <person name="An H.-J."/>
            <person name="Andrews-Pfannkoch C."/>
            <person name="Baldwin D."/>
            <person name="Ballew R.M."/>
            <person name="Basu A."/>
            <person name="Baxendale J."/>
            <person name="Bayraktaroglu L."/>
            <person name="Beasley E.M."/>
            <person name="Beeson K.Y."/>
            <person name="Benos P.V."/>
            <person name="Berman B.P."/>
            <person name="Bhandari D."/>
            <person name="Bolshakov S."/>
            <person name="Borkova D."/>
            <person name="Botchan M.R."/>
            <person name="Bouck J."/>
            <person name="Brokstein P."/>
            <person name="Brottier P."/>
            <person name="Burtis K.C."/>
            <person name="Busam D.A."/>
            <person name="Butler H."/>
            <person name="Cadieu E."/>
            <person name="Center A."/>
            <person name="Chandra I."/>
            <person name="Cherry J.M."/>
            <person name="Cawley S."/>
            <person name="Dahlke C."/>
            <person name="Davenport L.B."/>
            <person name="Davies P."/>
            <person name="de Pablos B."/>
            <person name="Delcher A."/>
            <person name="Deng Z."/>
            <person name="Mays A.D."/>
            <person name="Dew I."/>
            <person name="Dietz S.M."/>
            <person name="Dodson K."/>
            <person name="Doup L.E."/>
            <person name="Downes M."/>
            <person name="Dugan-Rocha S."/>
            <person name="Dunkov B.C."/>
            <person name="Dunn P."/>
            <person name="Durbin K.J."/>
            <person name="Evangelista C.C."/>
            <person name="Ferraz C."/>
            <person name="Ferriera S."/>
            <person name="Fleischmann W."/>
            <person name="Fosler C."/>
            <person name="Gabrielian A.E."/>
            <person name="Garg N.S."/>
            <person name="Gelbart W.M."/>
            <person name="Glasser K."/>
            <person name="Glodek A."/>
            <person name="Gong F."/>
            <person name="Gorrell J.H."/>
            <person name="Gu Z."/>
            <person name="Guan P."/>
            <person name="Harris M."/>
            <person name="Harris N.L."/>
            <person name="Harvey D.A."/>
            <person name="Heiman T.J."/>
            <person name="Hernandez J.R."/>
            <person name="Houck J."/>
            <person name="Hostin D."/>
            <person name="Houston K.A."/>
            <person name="Howland T.J."/>
            <person name="Wei M.-H."/>
            <person name="Ibegwam C."/>
            <person name="Jalali M."/>
            <person name="Kalush F."/>
            <person name="Karpen G.H."/>
            <person name="Ke Z."/>
            <person name="Kennison J.A."/>
            <person name="Ketchum K.A."/>
            <person name="Kimmel B.E."/>
            <person name="Kodira C.D."/>
            <person name="Kraft C.L."/>
            <person name="Kravitz S."/>
            <person name="Kulp D."/>
            <person name="Lai Z."/>
            <person name="Lasko P."/>
            <person name="Lei Y."/>
            <person name="Levitsky A.A."/>
            <person name="Li J.H."/>
            <person name="Li Z."/>
            <person name="Liang Y."/>
            <person name="Lin X."/>
            <person name="Liu X."/>
            <person name="Mattei B."/>
            <person name="McIntosh T.C."/>
            <person name="McLeod M.P."/>
            <person name="McPherson D."/>
            <person name="Merkulov G."/>
            <person name="Milshina N.V."/>
            <person name="Mobarry C."/>
            <person name="Morris J."/>
            <person name="Moshrefi A."/>
            <person name="Mount S.M."/>
            <person name="Moy M."/>
            <person name="Murphy B."/>
            <person name="Murphy L."/>
            <person name="Muzny D.M."/>
            <person name="Nelson D.L."/>
            <person name="Nelson D.R."/>
            <person name="Nelson K.A."/>
            <person name="Nixon K."/>
            <person name="Nusskern D.R."/>
            <person name="Pacleb J.M."/>
            <person name="Palazzolo M."/>
            <person name="Pittman G.S."/>
            <person name="Pan S."/>
            <person name="Pollard J."/>
            <person name="Puri V."/>
            <person name="Reese M.G."/>
            <person name="Reinert K."/>
            <person name="Remington K."/>
            <person name="Saunders R.D.C."/>
            <person name="Scheeler F."/>
            <person name="Shen H."/>
            <person name="Shue B.C."/>
            <person name="Siden-Kiamos I."/>
            <person name="Simpson M."/>
            <person name="Skupski M.P."/>
            <person name="Smith T.J."/>
            <person name="Spier E."/>
            <person name="Spradling A.C."/>
            <person name="Stapleton M."/>
            <person name="Strong R."/>
            <person name="Sun E."/>
            <person name="Svirskas R."/>
            <person name="Tector C."/>
            <person name="Turner R."/>
            <person name="Venter E."/>
            <person name="Wang A.H."/>
            <person name="Wang X."/>
            <person name="Wang Z.-Y."/>
            <person name="Wassarman D.A."/>
            <person name="Weinstock G.M."/>
            <person name="Weissenbach J."/>
            <person name="Williams S.M."/>
            <person name="Woodage T."/>
            <person name="Worley K.C."/>
            <person name="Wu D."/>
            <person name="Yang S."/>
            <person name="Yao Q.A."/>
            <person name="Ye J."/>
            <person name="Yeh R.-F."/>
            <person name="Zaveri J.S."/>
            <person name="Zhan M."/>
            <person name="Zhang G."/>
            <person name="Zhao Q."/>
            <person name="Zheng L."/>
            <person name="Zheng X.H."/>
            <person name="Zhong F.N."/>
            <person name="Zhong W."/>
            <person name="Zhou X."/>
            <person name="Zhu S.C."/>
            <person name="Zhu X."/>
            <person name="Smith H.O."/>
            <person name="Gibbs R.A."/>
            <person name="Myers E.W."/>
            <person name="Rubin G.M."/>
            <person name="Venter J.C."/>
        </authorList>
    </citation>
    <scope>NUCLEOTIDE SEQUENCE [LARGE SCALE GENOMIC DNA]</scope>
    <source>
        <strain>Berkeley</strain>
    </source>
</reference>
<reference key="3">
    <citation type="journal article" date="2002" name="Genome Biol.">
        <title>Annotation of the Drosophila melanogaster euchromatic genome: a systematic review.</title>
        <authorList>
            <person name="Misra S."/>
            <person name="Crosby M.A."/>
            <person name="Mungall C.J."/>
            <person name="Matthews B.B."/>
            <person name="Campbell K.S."/>
            <person name="Hradecky P."/>
            <person name="Huang Y."/>
            <person name="Kaminker J.S."/>
            <person name="Millburn G.H."/>
            <person name="Prochnik S.E."/>
            <person name="Smith C.D."/>
            <person name="Tupy J.L."/>
            <person name="Whitfield E.J."/>
            <person name="Bayraktaroglu L."/>
            <person name="Berman B.P."/>
            <person name="Bettencourt B.R."/>
            <person name="Celniker S.E."/>
            <person name="de Grey A.D.N.J."/>
            <person name="Drysdale R.A."/>
            <person name="Harris N.L."/>
            <person name="Richter J."/>
            <person name="Russo S."/>
            <person name="Schroeder A.J."/>
            <person name="Shu S.Q."/>
            <person name="Stapleton M."/>
            <person name="Yamada C."/>
            <person name="Ashburner M."/>
            <person name="Gelbart W.M."/>
            <person name="Rubin G.M."/>
            <person name="Lewis S.E."/>
        </authorList>
    </citation>
    <scope>GENOME REANNOTATION</scope>
    <scope>ALTERNATIVE SPLICING</scope>
    <source>
        <strain>Berkeley</strain>
    </source>
</reference>
<reference key="4">
    <citation type="journal article" date="2002" name="Genome Biol.">
        <title>A Drosophila full-length cDNA resource.</title>
        <authorList>
            <person name="Stapleton M."/>
            <person name="Carlson J.W."/>
            <person name="Brokstein P."/>
            <person name="Yu C."/>
            <person name="Champe M."/>
            <person name="George R.A."/>
            <person name="Guarin H."/>
            <person name="Kronmiller B."/>
            <person name="Pacleb J.M."/>
            <person name="Park S."/>
            <person name="Wan K.H."/>
            <person name="Rubin G.M."/>
            <person name="Celniker S.E."/>
        </authorList>
    </citation>
    <scope>NUCLEOTIDE SEQUENCE [LARGE SCALE MRNA] (ISOFORM 2.2)</scope>
    <source>
        <strain>Berkeley</strain>
        <tissue>Head</tissue>
    </source>
</reference>
<reference key="5">
    <citation type="journal article" date="1995" name="J. Neurochem.">
        <title>Characterization of nervana, a Drosophila melanogaster neuron-specific glycoprotein antigen recognized by anti-horseradish peroxidase antibodies.</title>
        <authorList>
            <person name="Sun B."/>
            <person name="Salvaterra P.M."/>
        </authorList>
    </citation>
    <scope>DEVELOPMENTAL STAGE</scope>
    <scope>TISSUE SPECIFICITY</scope>
    <source>
        <strain>Canton-S</strain>
        <tissue>Head</tissue>
    </source>
</reference>
<reference key="6">
    <citation type="journal article" date="1998" name="J. Neurochem.">
        <title>Functional analysis and tissue-specific expression of Drosophila Na+,K+-ATPase subunits.</title>
        <authorList>
            <person name="Sun B."/>
            <person name="Wang W."/>
            <person name="Salvaterra P.M."/>
        </authorList>
    </citation>
    <scope>FUNCTION</scope>
    <scope>TISSUE SPECIFICITY</scope>
</reference>
<reference key="7">
    <citation type="journal article" date="2007" name="Glycobiology">
        <title>Identification of N-glycosylated proteins from the central nervous system of Drosophila melanogaster.</title>
        <authorList>
            <person name="Koles K."/>
            <person name="Lim J.-M."/>
            <person name="Aoki K."/>
            <person name="Porterfield M."/>
            <person name="Tiemeyer M."/>
            <person name="Wells L."/>
            <person name="Panin V."/>
        </authorList>
    </citation>
    <scope>GLYCOSYLATION [LARGE SCALE ANALYSIS] AT ASN-206</scope>
    <scope>IDENTIFICATION BY MASS SPECTROMETRY</scope>
    <source>
        <strain>Oregon-R</strain>
        <tissue>Head</tissue>
    </source>
</reference>
<organism>
    <name type="scientific">Drosophila melanogaster</name>
    <name type="common">Fruit fly</name>
    <dbReference type="NCBI Taxonomy" id="7227"/>
    <lineage>
        <taxon>Eukaryota</taxon>
        <taxon>Metazoa</taxon>
        <taxon>Ecdysozoa</taxon>
        <taxon>Arthropoda</taxon>
        <taxon>Hexapoda</taxon>
        <taxon>Insecta</taxon>
        <taxon>Pterygota</taxon>
        <taxon>Neoptera</taxon>
        <taxon>Endopterygota</taxon>
        <taxon>Diptera</taxon>
        <taxon>Brachycera</taxon>
        <taxon>Muscomorpha</taxon>
        <taxon>Ephydroidea</taxon>
        <taxon>Drosophilidae</taxon>
        <taxon>Drosophila</taxon>
        <taxon>Sophophora</taxon>
    </lineage>
</organism>
<gene>
    <name type="primary">nrv2</name>
    <name type="ORF">CG9261</name>
</gene>
<evidence type="ECO:0000250" key="1"/>
<evidence type="ECO:0000255" key="2"/>
<evidence type="ECO:0000269" key="3">
    <source>
    </source>
</evidence>
<evidence type="ECO:0000269" key="4">
    <source>
    </source>
</evidence>
<evidence type="ECO:0000269" key="5">
    <source>
    </source>
</evidence>
<evidence type="ECO:0000303" key="6">
    <source>
    </source>
</evidence>
<evidence type="ECO:0000305" key="7"/>
<accession>Q24048</accession>
<accession>Q24047</accession>
<accession>Q9VM84</accession>
<accession>Q9VM85</accession>
<feature type="chain" id="PRO_0000219121" description="Sodium/potassium-transporting ATPase subunit beta-2">
    <location>
        <begin position="1"/>
        <end position="323"/>
    </location>
</feature>
<feature type="topological domain" description="Cytoplasmic" evidence="2">
    <location>
        <begin position="1"/>
        <end position="50"/>
    </location>
</feature>
<feature type="transmembrane region" description="Helical; Signal-anchor for type II membrane protein" evidence="2">
    <location>
        <begin position="51"/>
        <end position="71"/>
    </location>
</feature>
<feature type="topological domain" description="Extracellular" evidence="2">
    <location>
        <begin position="72"/>
        <end position="323"/>
    </location>
</feature>
<feature type="glycosylation site" description="N-linked (GlcNAc...) asparagine" evidence="2">
    <location>
        <position position="180"/>
    </location>
</feature>
<feature type="glycosylation site" description="N-linked (GlcNAc...) asparagine" evidence="3">
    <location>
        <position position="206"/>
    </location>
</feature>
<feature type="disulfide bond" evidence="1">
    <location>
        <begin position="153"/>
        <end position="165"/>
    </location>
</feature>
<feature type="disulfide bond" evidence="1">
    <location>
        <begin position="175"/>
        <end position="189"/>
    </location>
</feature>
<feature type="disulfide bond" evidence="1">
    <location>
        <begin position="241"/>
        <end position="298"/>
    </location>
</feature>
<feature type="splice variant" id="VSP_000350" description="In isoform 2.1." evidence="6">
    <original>MPTITEDCIDGFQQYYSRPPERPKKKSLKQMVYDSEDNSYFGRSMD</original>
    <variation>MSKPVPMSPSFVDEDLHNLRKPKPFKLGQFLYNTEDGTVMGRDRS</variation>
    <location>
        <begin position="1"/>
        <end position="46"/>
    </location>
</feature>
<feature type="sequence conflict" description="In Ref. 1; AAC46609/AAC46610." evidence="7" ref="1">
    <original>G</original>
    <variation>A</variation>
    <location>
        <position position="162"/>
    </location>
</feature>
<feature type="sequence conflict" description="In Ref. 1; AAC46609/AAC46610." evidence="7" ref="1">
    <original>H</original>
    <variation>R</variation>
    <location>
        <position position="307"/>
    </location>
</feature>
<keyword id="KW-0025">Alternative splicing</keyword>
<keyword id="KW-1003">Cell membrane</keyword>
<keyword id="KW-1015">Disulfide bond</keyword>
<keyword id="KW-0325">Glycoprotein</keyword>
<keyword id="KW-0406">Ion transport</keyword>
<keyword id="KW-0472">Membrane</keyword>
<keyword id="KW-0630">Potassium</keyword>
<keyword id="KW-0633">Potassium transport</keyword>
<keyword id="KW-1185">Reference proteome</keyword>
<keyword id="KW-0735">Signal-anchor</keyword>
<keyword id="KW-0915">Sodium</keyword>
<keyword id="KW-0739">Sodium transport</keyword>
<keyword id="KW-0740">Sodium/potassium transport</keyword>
<keyword id="KW-0812">Transmembrane</keyword>
<keyword id="KW-1133">Transmembrane helix</keyword>
<keyword id="KW-0813">Transport</keyword>
<name>ATPB2_DROME</name>
<proteinExistence type="evidence at protein level"/>